<protein>
    <recommendedName>
        <fullName evidence="2">Cytosolic Fe-S cluster assembly factor Nubp2 homolog</fullName>
    </recommendedName>
</protein>
<sequence>MLDKVKNVIVVLSGKGGVGKSTVSTQLALALRATGHKVGLLDIDLCGPSVPYLLGLEGSDIYQCEDGWVPIYTDESKTLAVMSIGFLLKNRNDPVIWRGPKKTMMIRQFLTDVKWEDMDYLIIDTPPGTSDEHITVMECMREVPCNGAIIVTTPQGVALDDVRKEITFCKKTGIKLLGIVENMSGFVCPHCTECTNIFSSNGGAELARLAQVPHLGTLPIDPRVGVLSGSTASVLNELPDSSTAQIMRNIVQHLDALTAVPTPAQV</sequence>
<dbReference type="EMBL" id="CH940647">
    <property type="protein sequence ID" value="EDW70443.1"/>
    <property type="molecule type" value="Genomic_DNA"/>
</dbReference>
<dbReference type="RefSeq" id="XP_002048101.2">
    <property type="nucleotide sequence ID" value="XM_002048065.2"/>
</dbReference>
<dbReference type="RefSeq" id="XP_032290367.1">
    <property type="nucleotide sequence ID" value="XM_032434476.2"/>
</dbReference>
<dbReference type="SMR" id="B4LGB4"/>
<dbReference type="FunCoup" id="B4LGB4">
    <property type="interactions" value="250"/>
</dbReference>
<dbReference type="STRING" id="7244.B4LGB4"/>
<dbReference type="EnsemblMetazoa" id="FBtr0227455">
    <property type="protein sequence ID" value="FBpp0225947"/>
    <property type="gene ID" value="FBgn0198788"/>
</dbReference>
<dbReference type="EnsemblMetazoa" id="XM_032434476.1">
    <property type="protein sequence ID" value="XP_032290367.1"/>
    <property type="gene ID" value="LOC6624362"/>
</dbReference>
<dbReference type="GeneID" id="6624362"/>
<dbReference type="eggNOG" id="KOG3022">
    <property type="taxonomic scope" value="Eukaryota"/>
</dbReference>
<dbReference type="HOGENOM" id="CLU_024839_0_1_1"/>
<dbReference type="InParanoid" id="B4LGB4"/>
<dbReference type="OMA" id="WIPVFAD"/>
<dbReference type="OrthoDB" id="1741334at2759"/>
<dbReference type="PhylomeDB" id="B4LGB4"/>
<dbReference type="Proteomes" id="UP000008792">
    <property type="component" value="Unassembled WGS sequence"/>
</dbReference>
<dbReference type="GO" id="GO:0005829">
    <property type="term" value="C:cytosol"/>
    <property type="evidence" value="ECO:0007669"/>
    <property type="project" value="TreeGrafter"/>
</dbReference>
<dbReference type="GO" id="GO:0051539">
    <property type="term" value="F:4 iron, 4 sulfur cluster binding"/>
    <property type="evidence" value="ECO:0007669"/>
    <property type="project" value="UniProtKB-UniRule"/>
</dbReference>
<dbReference type="GO" id="GO:0005524">
    <property type="term" value="F:ATP binding"/>
    <property type="evidence" value="ECO:0007669"/>
    <property type="project" value="UniProtKB-KW"/>
</dbReference>
<dbReference type="GO" id="GO:0140663">
    <property type="term" value="F:ATP-dependent FeS chaperone activity"/>
    <property type="evidence" value="ECO:0007669"/>
    <property type="project" value="InterPro"/>
</dbReference>
<dbReference type="GO" id="GO:0046872">
    <property type="term" value="F:metal ion binding"/>
    <property type="evidence" value="ECO:0007669"/>
    <property type="project" value="UniProtKB-KW"/>
</dbReference>
<dbReference type="GO" id="GO:0016226">
    <property type="term" value="P:iron-sulfur cluster assembly"/>
    <property type="evidence" value="ECO:0007669"/>
    <property type="project" value="UniProtKB-UniRule"/>
</dbReference>
<dbReference type="CDD" id="cd02037">
    <property type="entry name" value="Mrp_NBP35"/>
    <property type="match status" value="1"/>
</dbReference>
<dbReference type="FunFam" id="3.40.50.300:FF:000796">
    <property type="entry name" value="Cytosolic Fe-S cluster assembly factor NUBP2"/>
    <property type="match status" value="1"/>
</dbReference>
<dbReference type="Gene3D" id="3.40.50.300">
    <property type="entry name" value="P-loop containing nucleotide triphosphate hydrolases"/>
    <property type="match status" value="1"/>
</dbReference>
<dbReference type="HAMAP" id="MF_02040">
    <property type="entry name" value="Mrp_NBP35"/>
    <property type="match status" value="1"/>
</dbReference>
<dbReference type="HAMAP" id="MF_03039">
    <property type="entry name" value="NUBP2"/>
    <property type="match status" value="1"/>
</dbReference>
<dbReference type="InterPro" id="IPR000808">
    <property type="entry name" value="Mrp-like_CS"/>
</dbReference>
<dbReference type="InterPro" id="IPR019591">
    <property type="entry name" value="Mrp/NBP35_ATP-bd"/>
</dbReference>
<dbReference type="InterPro" id="IPR028600">
    <property type="entry name" value="NUBP2/Cfd1_eukaryotes"/>
</dbReference>
<dbReference type="InterPro" id="IPR027417">
    <property type="entry name" value="P-loop_NTPase"/>
</dbReference>
<dbReference type="InterPro" id="IPR033756">
    <property type="entry name" value="YlxH/NBP35"/>
</dbReference>
<dbReference type="PANTHER" id="PTHR23264:SF19">
    <property type="entry name" value="CYTOSOLIC FE-S CLUSTER ASSEMBLY FACTOR NUBP2"/>
    <property type="match status" value="1"/>
</dbReference>
<dbReference type="PANTHER" id="PTHR23264">
    <property type="entry name" value="NUCLEOTIDE-BINDING PROTEIN NBP35 YEAST -RELATED"/>
    <property type="match status" value="1"/>
</dbReference>
<dbReference type="Pfam" id="PF10609">
    <property type="entry name" value="ParA"/>
    <property type="match status" value="1"/>
</dbReference>
<dbReference type="SUPFAM" id="SSF52540">
    <property type="entry name" value="P-loop containing nucleoside triphosphate hydrolases"/>
    <property type="match status" value="1"/>
</dbReference>
<dbReference type="PROSITE" id="PS01215">
    <property type="entry name" value="MRP"/>
    <property type="match status" value="1"/>
</dbReference>
<evidence type="ECO:0000250" key="1">
    <source>
        <dbReference type="UniProtKB" id="Q9VPD2"/>
    </source>
</evidence>
<evidence type="ECO:0000255" key="2">
    <source>
        <dbReference type="HAMAP-Rule" id="MF_03039"/>
    </source>
</evidence>
<reference key="1">
    <citation type="journal article" date="2007" name="Nature">
        <title>Evolution of genes and genomes on the Drosophila phylogeny.</title>
        <authorList>
            <consortium name="Drosophila 12 genomes consortium"/>
        </authorList>
    </citation>
    <scope>NUCLEOTIDE SEQUENCE [LARGE SCALE GENOMIC DNA]</scope>
    <source>
        <strain>Tucson 15010-1051.87</strain>
    </source>
</reference>
<gene>
    <name evidence="1" type="primary">Nubp2</name>
    <name type="ORF">GJ11530</name>
</gene>
<comment type="function">
    <text evidence="2">Component of the cytosolic iron-sulfur (Fe/S) protein assembly (CIA) machinery. Required for maturation of extramitochondrial Fe-S proteins. The Nubp1-Nubp2 heterotetramer forms a Fe-S scaffold complex, mediating the de novo assembly of an Fe-S cluster and its transfer to target apoproteins.</text>
</comment>
<comment type="cofactor">
    <cofactor evidence="2">
        <name>[4Fe-4S] cluster</name>
        <dbReference type="ChEBI" id="CHEBI:49883"/>
    </cofactor>
    <text evidence="2">Binds 4 [4Fe-4S] clusters per heterotetramer. Contains two stable clusters in the N-termini of Nubp1 and two labile, bridging clusters between subunits of the Nubp1-Nubp2 heterotetramer.</text>
</comment>
<comment type="subunit">
    <text evidence="2">Heterotetramer of 2 Nubp1 and 2 Nubp2 chains.</text>
</comment>
<comment type="subcellular location">
    <subcellularLocation>
        <location evidence="2">Cytoplasm</location>
    </subcellularLocation>
</comment>
<comment type="similarity">
    <text evidence="2">Belongs to the Mrp/NBP35 ATP-binding proteins family. Nubp2/CFD1 subfamily.</text>
</comment>
<accession>B4LGB4</accession>
<keyword id="KW-0004">4Fe-4S</keyword>
<keyword id="KW-0067">ATP-binding</keyword>
<keyword id="KW-0963">Cytoplasm</keyword>
<keyword id="KW-0408">Iron</keyword>
<keyword id="KW-0411">Iron-sulfur</keyword>
<keyword id="KW-0479">Metal-binding</keyword>
<keyword id="KW-0547">Nucleotide-binding</keyword>
<keyword id="KW-1185">Reference proteome</keyword>
<organism>
    <name type="scientific">Drosophila virilis</name>
    <name type="common">Fruit fly</name>
    <dbReference type="NCBI Taxonomy" id="7244"/>
    <lineage>
        <taxon>Eukaryota</taxon>
        <taxon>Metazoa</taxon>
        <taxon>Ecdysozoa</taxon>
        <taxon>Arthropoda</taxon>
        <taxon>Hexapoda</taxon>
        <taxon>Insecta</taxon>
        <taxon>Pterygota</taxon>
        <taxon>Neoptera</taxon>
        <taxon>Endopterygota</taxon>
        <taxon>Diptera</taxon>
        <taxon>Brachycera</taxon>
        <taxon>Muscomorpha</taxon>
        <taxon>Ephydroidea</taxon>
        <taxon>Drosophilidae</taxon>
        <taxon>Drosophila</taxon>
    </lineage>
</organism>
<proteinExistence type="inferred from homology"/>
<name>NUBP2_DROVI</name>
<feature type="chain" id="PRO_0000382717" description="Cytosolic Fe-S cluster assembly factor Nubp2 homolog">
    <location>
        <begin position="1"/>
        <end position="266"/>
    </location>
</feature>
<feature type="binding site" evidence="2">
    <location>
        <begin position="14"/>
        <end position="21"/>
    </location>
    <ligand>
        <name>ATP</name>
        <dbReference type="ChEBI" id="CHEBI:30616"/>
    </ligand>
</feature>
<feature type="binding site" evidence="2">
    <location>
        <position position="188"/>
    </location>
    <ligand>
        <name>[4Fe-4S] cluster</name>
        <dbReference type="ChEBI" id="CHEBI:49883"/>
        <note>ligand shared between dimeric partners</note>
    </ligand>
</feature>
<feature type="binding site" evidence="2">
    <location>
        <position position="191"/>
    </location>
    <ligand>
        <name>[4Fe-4S] cluster</name>
        <dbReference type="ChEBI" id="CHEBI:49883"/>
        <note>ligand shared between dimeric partners</note>
    </ligand>
</feature>